<keyword id="KW-1003">Cell membrane</keyword>
<keyword id="KW-0472">Membrane</keyword>
<keyword id="KW-0812">Transmembrane</keyword>
<keyword id="KW-1133">Transmembrane helix</keyword>
<keyword id="KW-0813">Transport</keyword>
<comment type="subcellular location">
    <subcellularLocation>
        <location evidence="2">Cell membrane</location>
        <topology evidence="2">Multi-pass membrane protein</topology>
    </subcellularLocation>
</comment>
<comment type="similarity">
    <text evidence="2">Belongs to the EamA transporter family.</text>
</comment>
<comment type="caution">
    <text evidence="2">Was originally thought to originate from Pseudomonas denitrificans, but similarity searches show that the sequence is much closer to Sinorhizobium. The entry's taxonomy has been changed.</text>
</comment>
<dbReference type="EMBL" id="M62866">
    <property type="protein sequence ID" value="AAA25782.1"/>
    <property type="molecule type" value="Genomic_DNA"/>
</dbReference>
<dbReference type="SMR" id="P29939"/>
<dbReference type="TCDB" id="2.A.7.2.1">
    <property type="family name" value="the drug/metabolite transporter (dmt) superfamily"/>
</dbReference>
<dbReference type="GO" id="GO:0005886">
    <property type="term" value="C:plasma membrane"/>
    <property type="evidence" value="ECO:0007669"/>
    <property type="project" value="UniProtKB-SubCell"/>
</dbReference>
<dbReference type="FunFam" id="1.10.3730.20:FF:000009">
    <property type="entry name" value="EamA family transporter"/>
    <property type="match status" value="1"/>
</dbReference>
<dbReference type="Gene3D" id="1.10.3730.20">
    <property type="match status" value="1"/>
</dbReference>
<dbReference type="InterPro" id="IPR000620">
    <property type="entry name" value="EamA_dom"/>
</dbReference>
<dbReference type="PANTHER" id="PTHR22911">
    <property type="entry name" value="ACYL-MALONYL CONDENSING ENZYME-RELATED"/>
    <property type="match status" value="1"/>
</dbReference>
<dbReference type="PANTHER" id="PTHR22911:SF137">
    <property type="entry name" value="SOLUTE CARRIER FAMILY 35 MEMBER G2-RELATED"/>
    <property type="match status" value="1"/>
</dbReference>
<dbReference type="Pfam" id="PF00892">
    <property type="entry name" value="EamA"/>
    <property type="match status" value="1"/>
</dbReference>
<dbReference type="SUPFAM" id="SSF103481">
    <property type="entry name" value="Multidrug resistance efflux transporter EmrE"/>
    <property type="match status" value="1"/>
</dbReference>
<feature type="chain" id="PRO_0000108200" description="Uncharacterized transporter in cobO 3'region">
    <location>
        <begin position="1"/>
        <end position="141"/>
    </location>
</feature>
<feature type="transmembrane region" description="Helical" evidence="1">
    <location>
        <begin position="7"/>
        <end position="27"/>
    </location>
</feature>
<feature type="transmembrane region" description="Helical" evidence="1">
    <location>
        <begin position="34"/>
        <end position="54"/>
    </location>
</feature>
<feature type="transmembrane region" description="Helical" evidence="1">
    <location>
        <begin position="69"/>
        <end position="89"/>
    </location>
</feature>
<feature type="transmembrane region" description="Helical" evidence="1">
    <location>
        <begin position="97"/>
        <end position="117"/>
    </location>
</feature>
<feature type="transmembrane region" description="Helical" evidence="1">
    <location>
        <begin position="121"/>
        <end position="141"/>
    </location>
</feature>
<feature type="domain" description="EamA">
    <location>
        <begin position="14"/>
        <end position="140"/>
    </location>
</feature>
<sequence length="141" mass="15000">MSQSWQFWALLSAAFAALTAVFAKVGVAQINSDFATLIRTVVILCVIAAIVAATGQWQKPSEIPGRTWLFLALSGLATGASWLAYFRALKLGDAARVAPLDKLSIVMVAIFGVLFLGEKLNLMNWLGVAFIAAGALLLAVF</sequence>
<name>YCB6_SINSX</name>
<proteinExistence type="inferred from homology"/>
<evidence type="ECO:0000255" key="1"/>
<evidence type="ECO:0000305" key="2"/>
<reference key="1">
    <citation type="journal article" date="1991" name="J. Bacteriol.">
        <title>Nucleotide sequence and genetic analysis of a 13.1-kilobase-pair Pseudomonas denitrificans DNA fragment containing five cob genes and identification of structural genes encoding Cob(I)alamin adenosyltransferase, cobyric acid synthase, and bifunctional cobinamide kinase-cobinamide phosphate guanylyltransferase.</title>
        <authorList>
            <person name="Crouzet J."/>
            <person name="Levy-Schil S."/>
            <person name="Cameron B."/>
            <person name="Cauchois L."/>
            <person name="Rigault S."/>
            <person name="Rouyez M.-C."/>
            <person name="Blanche F."/>
            <person name="Debussche L."/>
            <person name="Thibaut D."/>
        </authorList>
    </citation>
    <scope>NUCLEOTIDE SEQUENCE [GENOMIC DNA]</scope>
    <source>
        <strain>SC510</strain>
    </source>
</reference>
<accession>P29939</accession>
<organism>
    <name type="scientific">Sinorhizobium sp</name>
    <dbReference type="NCBI Taxonomy" id="42445"/>
    <lineage>
        <taxon>Bacteria</taxon>
        <taxon>Pseudomonadati</taxon>
        <taxon>Pseudomonadota</taxon>
        <taxon>Alphaproteobacteria</taxon>
        <taxon>Hyphomicrobiales</taxon>
        <taxon>Rhizobiaceae</taxon>
        <taxon>Sinorhizobium/Ensifer group</taxon>
        <taxon>Sinorhizobium</taxon>
    </lineage>
</organism>
<protein>
    <recommendedName>
        <fullName>Uncharacterized transporter in cobO 3'region</fullName>
    </recommendedName>
    <alternativeName>
        <fullName>ORF6</fullName>
    </alternativeName>
</protein>